<accession>Q65E69</accession>
<accession>Q62PN9</accession>
<gene>
    <name evidence="1" type="primary">kduI</name>
    <name type="ordered locus">BLi03829</name>
    <name type="ordered locus">BL02434</name>
</gene>
<name>KDUI_BACLD</name>
<feature type="chain" id="PRO_1000045080" description="4-deoxy-L-threo-5-hexosulose-uronate ketol-isomerase">
    <location>
        <begin position="1"/>
        <end position="275"/>
    </location>
</feature>
<feature type="binding site" evidence="1">
    <location>
        <position position="193"/>
    </location>
    <ligand>
        <name>Zn(2+)</name>
        <dbReference type="ChEBI" id="CHEBI:29105"/>
    </ligand>
</feature>
<feature type="binding site" evidence="1">
    <location>
        <position position="195"/>
    </location>
    <ligand>
        <name>Zn(2+)</name>
        <dbReference type="ChEBI" id="CHEBI:29105"/>
    </ligand>
</feature>
<feature type="binding site" evidence="1">
    <location>
        <position position="200"/>
    </location>
    <ligand>
        <name>Zn(2+)</name>
        <dbReference type="ChEBI" id="CHEBI:29105"/>
    </ligand>
</feature>
<feature type="binding site" evidence="1">
    <location>
        <position position="242"/>
    </location>
    <ligand>
        <name>Zn(2+)</name>
        <dbReference type="ChEBI" id="CHEBI:29105"/>
    </ligand>
</feature>
<keyword id="KW-0413">Isomerase</keyword>
<keyword id="KW-0479">Metal-binding</keyword>
<keyword id="KW-1185">Reference proteome</keyword>
<keyword id="KW-0862">Zinc</keyword>
<protein>
    <recommendedName>
        <fullName evidence="1">4-deoxy-L-threo-5-hexosulose-uronate ketol-isomerase</fullName>
        <ecNumber evidence="1">5.3.1.17</ecNumber>
    </recommendedName>
    <alternativeName>
        <fullName evidence="1">5-keto-4-deoxyuronate isomerase</fullName>
    </alternativeName>
    <alternativeName>
        <fullName evidence="1">DKI isomerase</fullName>
    </alternativeName>
</protein>
<comment type="function">
    <text evidence="1">Catalyzes the isomerization of 5-dehydro-4-deoxy-D-glucuronate to 3-deoxy-D-glycero-2,5-hexodiulosonate.</text>
</comment>
<comment type="catalytic activity">
    <reaction evidence="1">
        <text>5-dehydro-4-deoxy-D-glucuronate = 3-deoxy-D-glycero-2,5-hexodiulosonate</text>
        <dbReference type="Rhea" id="RHEA:23896"/>
        <dbReference type="ChEBI" id="CHEBI:17117"/>
        <dbReference type="ChEBI" id="CHEBI:29071"/>
        <dbReference type="EC" id="5.3.1.17"/>
    </reaction>
</comment>
<comment type="cofactor">
    <cofactor evidence="1">
        <name>Zn(2+)</name>
        <dbReference type="ChEBI" id="CHEBI:29105"/>
    </cofactor>
    <text evidence="1">Binds 1 zinc ion per subunit.</text>
</comment>
<comment type="pathway">
    <text evidence="1">Glycan metabolism; pectin degradation; 2-dehydro-3-deoxy-D-gluconate from pectin: step 4/5.</text>
</comment>
<comment type="similarity">
    <text evidence="1">Belongs to the KduI family.</text>
</comment>
<evidence type="ECO:0000255" key="1">
    <source>
        <dbReference type="HAMAP-Rule" id="MF_00687"/>
    </source>
</evidence>
<sequence length="275" mass="31215">MENRYSVHPEQAKRFTTAELREHFLIESLFVENKLNMFYSHEDRVVIGGAVPVKESIALDAGDFLKTDYFLERREIGIVNVGKPGAVKVGDEEYVLEHKDFLYIGLGNKDVFFSSLNEGGAKFYFISATAHQKYPVQKASLSELPYDHLGEEASSNVRNLYKVIHADGIQSCQLMMGITFLEPNNTWNTMPAHVHDRRMEVYLYLDLAEDAKVFHFMGEPTETRHLVVGNEQAVISPAWSVHSGSGTSNYCFIWAMAGENYTFKDMDAVPMNVIR</sequence>
<proteinExistence type="inferred from homology"/>
<reference key="1">
    <citation type="journal article" date="2004" name="J. Mol. Microbiol. Biotechnol.">
        <title>The complete genome sequence of Bacillus licheniformis DSM13, an organism with great industrial potential.</title>
        <authorList>
            <person name="Veith B."/>
            <person name="Herzberg C."/>
            <person name="Steckel S."/>
            <person name="Feesche J."/>
            <person name="Maurer K.H."/>
            <person name="Ehrenreich P."/>
            <person name="Baeumer S."/>
            <person name="Henne A."/>
            <person name="Liesegang H."/>
            <person name="Merkl R."/>
            <person name="Ehrenreich A."/>
            <person name="Gottschalk G."/>
        </authorList>
    </citation>
    <scope>NUCLEOTIDE SEQUENCE [LARGE SCALE GENOMIC DNA]</scope>
    <source>
        <strain>ATCC 14580 / DSM 13 / JCM 2505 / CCUG 7422 / NBRC 12200 / NCIMB 9375 / NCTC 10341 / NRRL NRS-1264 / Gibson 46</strain>
    </source>
</reference>
<reference key="2">
    <citation type="journal article" date="2004" name="Genome Biol.">
        <title>Complete genome sequence of the industrial bacterium Bacillus licheniformis and comparisons with closely related Bacillus species.</title>
        <authorList>
            <person name="Rey M.W."/>
            <person name="Ramaiya P."/>
            <person name="Nelson B.A."/>
            <person name="Brody-Karpin S.D."/>
            <person name="Zaretsky E.J."/>
            <person name="Tang M."/>
            <person name="Lopez de Leon A."/>
            <person name="Xiang H."/>
            <person name="Gusti V."/>
            <person name="Clausen I.G."/>
            <person name="Olsen P.B."/>
            <person name="Rasmussen M.D."/>
            <person name="Andersen J.T."/>
            <person name="Joergensen P.L."/>
            <person name="Larsen T.S."/>
            <person name="Sorokin A."/>
            <person name="Bolotin A."/>
            <person name="Lapidus A."/>
            <person name="Galleron N."/>
            <person name="Ehrlich S.D."/>
            <person name="Berka R.M."/>
        </authorList>
    </citation>
    <scope>NUCLEOTIDE SEQUENCE [LARGE SCALE GENOMIC DNA]</scope>
    <source>
        <strain>ATCC 14580 / DSM 13 / JCM 2505 / CCUG 7422 / NBRC 12200 / NCIMB 9375 / NCTC 10341 / NRRL NRS-1264 / Gibson 46</strain>
    </source>
</reference>
<dbReference type="EC" id="5.3.1.17" evidence="1"/>
<dbReference type="EMBL" id="CP000002">
    <property type="protein sequence ID" value="AAU25272.2"/>
    <property type="molecule type" value="Genomic_DNA"/>
</dbReference>
<dbReference type="EMBL" id="AE017333">
    <property type="protein sequence ID" value="AAU42645.1"/>
    <property type="molecule type" value="Genomic_DNA"/>
</dbReference>
<dbReference type="RefSeq" id="WP_003185805.1">
    <property type="nucleotide sequence ID" value="NC_006322.1"/>
</dbReference>
<dbReference type="SMR" id="Q65E69"/>
<dbReference type="STRING" id="279010.BL02434"/>
<dbReference type="GeneID" id="92859596"/>
<dbReference type="KEGG" id="bld:BLi03829"/>
<dbReference type="KEGG" id="bli:BL02434"/>
<dbReference type="eggNOG" id="COG3717">
    <property type="taxonomic scope" value="Bacteria"/>
</dbReference>
<dbReference type="HOGENOM" id="CLU_062609_0_0_9"/>
<dbReference type="UniPathway" id="UPA00545">
    <property type="reaction ID" value="UER00826"/>
</dbReference>
<dbReference type="Proteomes" id="UP000000606">
    <property type="component" value="Chromosome"/>
</dbReference>
<dbReference type="GO" id="GO:0008697">
    <property type="term" value="F:4-deoxy-L-threo-5-hexosulose-uronate ketol-isomerase activity"/>
    <property type="evidence" value="ECO:0007669"/>
    <property type="project" value="UniProtKB-UniRule"/>
</dbReference>
<dbReference type="GO" id="GO:0008270">
    <property type="term" value="F:zinc ion binding"/>
    <property type="evidence" value="ECO:0007669"/>
    <property type="project" value="UniProtKB-UniRule"/>
</dbReference>
<dbReference type="GO" id="GO:0019698">
    <property type="term" value="P:D-galacturonate catabolic process"/>
    <property type="evidence" value="ECO:0007669"/>
    <property type="project" value="TreeGrafter"/>
</dbReference>
<dbReference type="GO" id="GO:0042840">
    <property type="term" value="P:D-glucuronate catabolic process"/>
    <property type="evidence" value="ECO:0007669"/>
    <property type="project" value="TreeGrafter"/>
</dbReference>
<dbReference type="GO" id="GO:0045490">
    <property type="term" value="P:pectin catabolic process"/>
    <property type="evidence" value="ECO:0007669"/>
    <property type="project" value="UniProtKB-UniRule"/>
</dbReference>
<dbReference type="CDD" id="cd20491">
    <property type="entry name" value="cupin_KduI_C"/>
    <property type="match status" value="1"/>
</dbReference>
<dbReference type="CDD" id="cd20294">
    <property type="entry name" value="cupin_KduI_N"/>
    <property type="match status" value="1"/>
</dbReference>
<dbReference type="Gene3D" id="2.60.120.10">
    <property type="entry name" value="Jelly Rolls"/>
    <property type="match status" value="1"/>
</dbReference>
<dbReference type="Gene3D" id="2.60.120.520">
    <property type="entry name" value="pectin degrading enzyme 5-keto 4- deoxyuronate isomerase, domain 1"/>
    <property type="match status" value="1"/>
</dbReference>
<dbReference type="HAMAP" id="MF_00687">
    <property type="entry name" value="KduI"/>
    <property type="match status" value="1"/>
</dbReference>
<dbReference type="InterPro" id="IPR007045">
    <property type="entry name" value="KduI"/>
</dbReference>
<dbReference type="InterPro" id="IPR021120">
    <property type="entry name" value="KduI/IolB_isomerase"/>
</dbReference>
<dbReference type="InterPro" id="IPR027449">
    <property type="entry name" value="KduI_N"/>
</dbReference>
<dbReference type="InterPro" id="IPR014710">
    <property type="entry name" value="RmlC-like_jellyroll"/>
</dbReference>
<dbReference type="InterPro" id="IPR011051">
    <property type="entry name" value="RmlC_Cupin_sf"/>
</dbReference>
<dbReference type="NCBIfam" id="NF002091">
    <property type="entry name" value="PRK00924.1"/>
    <property type="match status" value="1"/>
</dbReference>
<dbReference type="PANTHER" id="PTHR38461">
    <property type="entry name" value="4-DEOXY-L-THREO-5-HEXOSULOSE-URONATE KETOL-ISOMERASE"/>
    <property type="match status" value="1"/>
</dbReference>
<dbReference type="PANTHER" id="PTHR38461:SF1">
    <property type="entry name" value="4-DEOXY-L-THREO-5-HEXOSULOSE-URONATE KETOL-ISOMERASE"/>
    <property type="match status" value="1"/>
</dbReference>
<dbReference type="Pfam" id="PF04962">
    <property type="entry name" value="KduI"/>
    <property type="match status" value="1"/>
</dbReference>
<dbReference type="PIRSF" id="PIRSF006625">
    <property type="entry name" value="KduI"/>
    <property type="match status" value="1"/>
</dbReference>
<dbReference type="SUPFAM" id="SSF51182">
    <property type="entry name" value="RmlC-like cupins"/>
    <property type="match status" value="1"/>
</dbReference>
<organism>
    <name type="scientific">Bacillus licheniformis (strain ATCC 14580 / DSM 13 / JCM 2505 / CCUG 7422 / NBRC 12200 / NCIMB 9375 / NCTC 10341 / NRRL NRS-1264 / Gibson 46)</name>
    <dbReference type="NCBI Taxonomy" id="279010"/>
    <lineage>
        <taxon>Bacteria</taxon>
        <taxon>Bacillati</taxon>
        <taxon>Bacillota</taxon>
        <taxon>Bacilli</taxon>
        <taxon>Bacillales</taxon>
        <taxon>Bacillaceae</taxon>
        <taxon>Bacillus</taxon>
    </lineage>
</organism>